<organism>
    <name type="scientific">Canis lupus familiaris</name>
    <name type="common">Dog</name>
    <name type="synonym">Canis familiaris</name>
    <dbReference type="NCBI Taxonomy" id="9615"/>
    <lineage>
        <taxon>Eukaryota</taxon>
        <taxon>Metazoa</taxon>
        <taxon>Chordata</taxon>
        <taxon>Craniata</taxon>
        <taxon>Vertebrata</taxon>
        <taxon>Euteleostomi</taxon>
        <taxon>Mammalia</taxon>
        <taxon>Eutheria</taxon>
        <taxon>Laurasiatheria</taxon>
        <taxon>Carnivora</taxon>
        <taxon>Caniformia</taxon>
        <taxon>Canidae</taxon>
        <taxon>Canis</taxon>
    </lineage>
</organism>
<feature type="signal peptide" evidence="5">
    <location>
        <begin position="1"/>
        <end position="33"/>
    </location>
</feature>
<feature type="chain" id="PRO_0000020899" description="Hematopoietic progenitor cell antigen CD34">
    <location>
        <begin position="34"/>
        <end position="389"/>
    </location>
</feature>
<feature type="topological domain" description="Extracellular" evidence="3">
    <location>
        <begin position="34"/>
        <end position="294"/>
    </location>
</feature>
<feature type="transmembrane region" description="Helical" evidence="3">
    <location>
        <begin position="295"/>
        <end position="315"/>
    </location>
</feature>
<feature type="topological domain" description="Cytoplasmic" evidence="3">
    <location>
        <begin position="316"/>
        <end position="389"/>
    </location>
</feature>
<feature type="region of interest" description="Disordered" evidence="4">
    <location>
        <begin position="325"/>
        <end position="389"/>
    </location>
</feature>
<feature type="compositionally biased region" description="Polar residues" evidence="4">
    <location>
        <begin position="361"/>
        <end position="378"/>
    </location>
</feature>
<feature type="modified residue" description="Phosphotyrosine" evidence="2">
    <location>
        <position position="333"/>
    </location>
</feature>
<feature type="modified residue" description="Phosphotyrosine" evidence="2">
    <location>
        <position position="343"/>
    </location>
</feature>
<feature type="modified residue" description="Phosphoserine" evidence="2">
    <location>
        <position position="350"/>
    </location>
</feature>
<feature type="glycosylation site" description="N-linked (GlcNAc...) asparagine" evidence="3">
    <location>
        <position position="55"/>
    </location>
</feature>
<feature type="glycosylation site" description="N-linked (GlcNAc...) asparagine" evidence="3">
    <location>
        <position position="107"/>
    </location>
</feature>
<feature type="glycosylation site" description="N-linked (GlcNAc...) asparagine" evidence="3">
    <location>
        <position position="126"/>
    </location>
</feature>
<feature type="glycosylation site" description="N-linked (GlcNAc...) asparagine" evidence="3">
    <location>
        <position position="142"/>
    </location>
</feature>
<feature type="glycosylation site" description="N-linked (GlcNAc...) asparagine" evidence="3">
    <location>
        <position position="149"/>
    </location>
</feature>
<feature type="glycosylation site" description="N-linked (GlcNAc...) asparagine" evidence="3">
    <location>
        <position position="200"/>
    </location>
</feature>
<feature type="glycosylation site" description="N-linked (GlcNAc...) asparagine" evidence="3">
    <location>
        <position position="253"/>
    </location>
</feature>
<feature type="splice variant" id="VSP_004157" description="In isoform Short." evidence="6">
    <original>GEDP</original>
    <variation>ELEP</variation>
    <location>
        <begin position="329"/>
        <end position="332"/>
    </location>
</feature>
<feature type="splice variant" id="VSP_004158" description="In isoform Short." evidence="6">
    <location>
        <begin position="333"/>
        <end position="389"/>
    </location>
</feature>
<accession>Q28270</accession>
<sequence>MLAGRGARAGGGLPRGWTALCLLSLLPFGFTNTETVITPTTVPTSTEIMSAVSENTSKREAITLTPSGTTTLYSVSQDSSGTTATISETTVHVTSTSEITLTPGTMNSSVQSQTSLAITVSFTPTNFSTSSVTLEPSLLPGNGSDPPYNSTSLVTSPTEYYTSLSPTPSRNDTPSTIKGEIKCSGVKEVKLNQGICLELNETSSCEDFKKDNEEKLTQVLCEKEPAEAGAGVCSLLLAQSEVRPHCLLLVLANKTELFSKLQLLRKHQSDLKKLGIRDFTEQDVGSHQSYSRKTLIALVTSGILLAVLGTTGYFLMNRRSWSPTGERLGEDPYYTENGGGQGYSSGPGVSPEAQGKASVNRGPQENGTGQATSRNGHSARQHMVADTEL</sequence>
<gene>
    <name type="primary">CD34</name>
</gene>
<protein>
    <recommendedName>
        <fullName>Hematopoietic progenitor cell antigen CD34</fullName>
    </recommendedName>
    <cdAntigenName>CD34</cdAntigenName>
</protein>
<comment type="function">
    <text evidence="1">Possible adhesion molecule with a role in early hematopoiesis by mediating the attachment of stem cells to the bone marrow extracellular matrix or directly to stromal cells. Could act as a scaffold for the attachment of lineage specific glycans, allowing stem cells to bind to lectins expressed by stromal cells or other marrow components. Presents carbohydrate ligands to selectins (By similarity).</text>
</comment>
<comment type="subcellular location">
    <subcellularLocation>
        <location>Membrane</location>
        <topology>Single-pass type I membrane protein</topology>
    </subcellularLocation>
</comment>
<comment type="alternative products">
    <event type="alternative splicing"/>
    <isoform>
        <id>Q28270-1</id>
        <name>Long</name>
        <sequence type="displayed"/>
    </isoform>
    <isoform>
        <id>Q28270-2</id>
        <name>Short</name>
        <sequence type="described" ref="VSP_004157 VSP_004158"/>
    </isoform>
</comment>
<comment type="tissue specificity">
    <text>Selectively expressed on hematopoietic progenitor cells and vascular endothelium.</text>
</comment>
<comment type="developmental stage">
    <text>On early hematopoietic progenitor cells.</text>
</comment>
<comment type="PTM">
    <text evidence="1">Highly glycosylated.</text>
</comment>
<comment type="PTM">
    <text evidence="1">Phosphorylated on serine residues by PKC.</text>
</comment>
<comment type="similarity">
    <text evidence="7">Belongs to the CD34 family.</text>
</comment>
<evidence type="ECO:0000250" key="1"/>
<evidence type="ECO:0000250" key="2">
    <source>
        <dbReference type="UniProtKB" id="Q64314"/>
    </source>
</evidence>
<evidence type="ECO:0000255" key="3"/>
<evidence type="ECO:0000256" key="4">
    <source>
        <dbReference type="SAM" id="MobiDB-lite"/>
    </source>
</evidence>
<evidence type="ECO:0000269" key="5">
    <source>
    </source>
</evidence>
<evidence type="ECO:0000303" key="6">
    <source>
    </source>
</evidence>
<evidence type="ECO:0000305" key="7"/>
<name>CD34_CANLF</name>
<reference key="1">
    <citation type="journal article" date="1996" name="Blood">
        <title>Canine CD34: cloning of the cDNA and evaluation of an antiserum to recombinant protein.</title>
        <authorList>
            <person name="McSweeney P.A."/>
            <person name="Rouleau K.A."/>
            <person name="Storb R."/>
            <person name="Bolles L."/>
            <person name="Wallace P.M."/>
            <person name="Beauchamp M."/>
            <person name="Krizanac-Bengez L."/>
            <person name="Moore P."/>
            <person name="Sale G."/>
            <person name="Sandmaier B."/>
            <person name="de Revel T."/>
            <person name="Appelbaum F.R."/>
            <person name="Nash R.A."/>
        </authorList>
    </citation>
    <scope>NUCLEOTIDE SEQUENCE [MRNA] (ISOFORMS LONG AND SHORT)</scope>
    <scope>PROTEIN SEQUENCE OF 34-52</scope>
    <source>
        <tissue>Myeloid leukemia cell</tissue>
    </source>
</reference>
<keyword id="KW-0025">Alternative splicing</keyword>
<keyword id="KW-0130">Cell adhesion</keyword>
<keyword id="KW-0903">Direct protein sequencing</keyword>
<keyword id="KW-0325">Glycoprotein</keyword>
<keyword id="KW-0472">Membrane</keyword>
<keyword id="KW-0597">Phosphoprotein</keyword>
<keyword id="KW-1185">Reference proteome</keyword>
<keyword id="KW-0732">Signal</keyword>
<keyword id="KW-0812">Transmembrane</keyword>
<keyword id="KW-1133">Transmembrane helix</keyword>
<proteinExistence type="evidence at protein level"/>
<dbReference type="EMBL" id="U49457">
    <property type="protein sequence ID" value="AAB41055.1"/>
    <property type="molecule type" value="mRNA"/>
</dbReference>
<dbReference type="EMBL" id="U49458">
    <property type="protein sequence ID" value="AAB48004.1"/>
    <property type="molecule type" value="mRNA"/>
</dbReference>
<dbReference type="RefSeq" id="NP_001003341.1">
    <molecule id="Q28270-1"/>
    <property type="nucleotide sequence ID" value="NM_001003341.1"/>
</dbReference>
<dbReference type="RefSeq" id="XP_038526428.1">
    <molecule id="Q28270-2"/>
    <property type="nucleotide sequence ID" value="XM_038670500.1"/>
</dbReference>
<dbReference type="FunCoup" id="Q28270">
    <property type="interactions" value="104"/>
</dbReference>
<dbReference type="STRING" id="9615.ENSCAFP00000017250"/>
<dbReference type="GlyCosmos" id="Q28270">
    <property type="glycosylation" value="7 sites, No reported glycans"/>
</dbReference>
<dbReference type="PaxDb" id="9612-ENSCAFP00000017250"/>
<dbReference type="Ensembl" id="ENSCAFT00030032483.1">
    <molecule id="Q28270-2"/>
    <property type="protein sequence ID" value="ENSCAFP00030028333.1"/>
    <property type="gene ID" value="ENSCAFG00030017516.1"/>
</dbReference>
<dbReference type="Ensembl" id="ENSCAFT00040030419.1">
    <molecule id="Q28270-2"/>
    <property type="protein sequence ID" value="ENSCAFP00040026436.1"/>
    <property type="gene ID" value="ENSCAFG00040016371.1"/>
</dbReference>
<dbReference type="GeneID" id="415130"/>
<dbReference type="KEGG" id="cfa:415130"/>
<dbReference type="CTD" id="947"/>
<dbReference type="eggNOG" id="ENOG502RYP9">
    <property type="taxonomic scope" value="Eukaryota"/>
</dbReference>
<dbReference type="InParanoid" id="Q28270"/>
<dbReference type="OrthoDB" id="8945512at2759"/>
<dbReference type="Reactome" id="R-CFA-198933">
    <property type="pathway name" value="Immunoregulatory interactions between a Lymphoid and a non-Lymphoid cell"/>
</dbReference>
<dbReference type="Proteomes" id="UP000002254">
    <property type="component" value="Unplaced"/>
</dbReference>
<dbReference type="Proteomes" id="UP000694429">
    <property type="component" value="Chromosome 7"/>
</dbReference>
<dbReference type="Proteomes" id="UP000694542">
    <property type="component" value="Chromosome 7"/>
</dbReference>
<dbReference type="Proteomes" id="UP000805418">
    <property type="component" value="Unplaced"/>
</dbReference>
<dbReference type="GO" id="GO:0016324">
    <property type="term" value="C:apical plasma membrane"/>
    <property type="evidence" value="ECO:0000250"/>
    <property type="project" value="UniProtKB"/>
</dbReference>
<dbReference type="GO" id="GO:0009925">
    <property type="term" value="C:basal plasma membrane"/>
    <property type="evidence" value="ECO:0000250"/>
    <property type="project" value="UniProtKB"/>
</dbReference>
<dbReference type="GO" id="GO:0005737">
    <property type="term" value="C:cytoplasm"/>
    <property type="evidence" value="ECO:0000250"/>
    <property type="project" value="UniProtKB"/>
</dbReference>
<dbReference type="GO" id="GO:0009897">
    <property type="term" value="C:external side of plasma membrane"/>
    <property type="evidence" value="ECO:0000250"/>
    <property type="project" value="UniProtKB"/>
</dbReference>
<dbReference type="GO" id="GO:0036053">
    <property type="term" value="C:glomerular endothelium fenestra"/>
    <property type="evidence" value="ECO:0000250"/>
    <property type="project" value="UniProtKB"/>
</dbReference>
<dbReference type="GO" id="GO:0045171">
    <property type="term" value="C:intercellular bridge"/>
    <property type="evidence" value="ECO:0000250"/>
    <property type="project" value="UniProtKB"/>
</dbReference>
<dbReference type="GO" id="GO:0005764">
    <property type="term" value="C:lysosome"/>
    <property type="evidence" value="ECO:0000250"/>
    <property type="project" value="UniProtKB"/>
</dbReference>
<dbReference type="GO" id="GO:0048471">
    <property type="term" value="C:perinuclear region of cytoplasm"/>
    <property type="evidence" value="ECO:0000250"/>
    <property type="project" value="UniProtKB"/>
</dbReference>
<dbReference type="GO" id="GO:0005886">
    <property type="term" value="C:plasma membrane"/>
    <property type="evidence" value="ECO:0000250"/>
    <property type="project" value="UniProtKB"/>
</dbReference>
<dbReference type="GO" id="GO:0030246">
    <property type="term" value="F:carbohydrate binding"/>
    <property type="evidence" value="ECO:0000250"/>
    <property type="project" value="HGNC-UCL"/>
</dbReference>
<dbReference type="GO" id="GO:0098609">
    <property type="term" value="P:cell-cell adhesion"/>
    <property type="evidence" value="ECO:0000250"/>
    <property type="project" value="HGNC-UCL"/>
</dbReference>
<dbReference type="GO" id="GO:0007160">
    <property type="term" value="P:cell-matrix adhesion"/>
    <property type="evidence" value="ECO:0000318"/>
    <property type="project" value="GO_Central"/>
</dbReference>
<dbReference type="GO" id="GO:0003094">
    <property type="term" value="P:glomerular filtration"/>
    <property type="evidence" value="ECO:0000250"/>
    <property type="project" value="UniProtKB"/>
</dbReference>
<dbReference type="GO" id="GO:0050900">
    <property type="term" value="P:leukocyte migration"/>
    <property type="evidence" value="ECO:0000250"/>
    <property type="project" value="HGNC-UCL"/>
</dbReference>
<dbReference type="GO" id="GO:0035759">
    <property type="term" value="P:mesangial cell-matrix adhesion"/>
    <property type="evidence" value="ECO:0000250"/>
    <property type="project" value="UniProtKB"/>
</dbReference>
<dbReference type="GO" id="GO:0045766">
    <property type="term" value="P:positive regulation of angiogenesis"/>
    <property type="evidence" value="ECO:0000250"/>
    <property type="project" value="UniProtKB"/>
</dbReference>
<dbReference type="GO" id="GO:0042482">
    <property type="term" value="P:positive regulation of odontogenesis"/>
    <property type="evidence" value="ECO:0000250"/>
    <property type="project" value="UniProtKB"/>
</dbReference>
<dbReference type="GO" id="GO:2001214">
    <property type="term" value="P:positive regulation of vasculogenesis"/>
    <property type="evidence" value="ECO:0000250"/>
    <property type="project" value="UniProtKB"/>
</dbReference>
<dbReference type="GO" id="GO:0001894">
    <property type="term" value="P:tissue homeostasis"/>
    <property type="evidence" value="ECO:0000250"/>
    <property type="project" value="UniProtKB"/>
</dbReference>
<dbReference type="InterPro" id="IPR008083">
    <property type="entry name" value="CD34"/>
</dbReference>
<dbReference type="InterPro" id="IPR013836">
    <property type="entry name" value="CD34/Podocalyxin"/>
</dbReference>
<dbReference type="PANTHER" id="PTHR16677">
    <property type="entry name" value="HEMATOPOIETIC PROGENITOR CELL ANTIGEN CD34"/>
    <property type="match status" value="1"/>
</dbReference>
<dbReference type="PANTHER" id="PTHR16677:SF1">
    <property type="entry name" value="HEMATOPOIETIC PROGENITOR CELL ANTIGEN CD34"/>
    <property type="match status" value="1"/>
</dbReference>
<dbReference type="Pfam" id="PF06365">
    <property type="entry name" value="CD34_antigen"/>
    <property type="match status" value="1"/>
</dbReference>
<dbReference type="PRINTS" id="PR01700">
    <property type="entry name" value="CD34ANTIGEN"/>
</dbReference>